<comment type="function">
    <text evidence="1">Vacuolar effluxer which mediate the efflux of amino acids resulting from autophagic degradation. The release of autophagic amino acids allows the maintenance of protein synthesis and viability during nitrogen starvation (By similarity).</text>
</comment>
<comment type="subcellular location">
    <subcellularLocation>
        <location evidence="1">Vacuole membrane</location>
        <topology evidence="1">Multi-pass membrane protein</topology>
    </subcellularLocation>
    <text evidence="1">Vacuole and punctate structures.</text>
</comment>
<comment type="similarity">
    <text evidence="4">Belongs to the ATG22 family.</text>
</comment>
<dbReference type="EMBL" id="DS027696">
    <property type="protein sequence ID" value="EAW18344.1"/>
    <property type="molecule type" value="Genomic_DNA"/>
</dbReference>
<dbReference type="RefSeq" id="XP_001260241.1">
    <property type="nucleotide sequence ID" value="XM_001260240.1"/>
</dbReference>
<dbReference type="STRING" id="331117.A1DG37"/>
<dbReference type="GlyCosmos" id="A1DG37">
    <property type="glycosylation" value="3 sites, No reported glycans"/>
</dbReference>
<dbReference type="EnsemblFungi" id="EAW18344">
    <property type="protein sequence ID" value="EAW18344"/>
    <property type="gene ID" value="NFIA_082950"/>
</dbReference>
<dbReference type="GeneID" id="4586798"/>
<dbReference type="KEGG" id="nfi:NFIA_082950"/>
<dbReference type="VEuPathDB" id="FungiDB:NFIA_082950"/>
<dbReference type="eggNOG" id="ENOG502QR9I">
    <property type="taxonomic scope" value="Eukaryota"/>
</dbReference>
<dbReference type="HOGENOM" id="CLU_017518_1_0_1"/>
<dbReference type="OMA" id="QQQWEMY"/>
<dbReference type="OrthoDB" id="192733at2759"/>
<dbReference type="Proteomes" id="UP000006702">
    <property type="component" value="Unassembled WGS sequence"/>
</dbReference>
<dbReference type="GO" id="GO:0005774">
    <property type="term" value="C:vacuolar membrane"/>
    <property type="evidence" value="ECO:0007669"/>
    <property type="project" value="UniProtKB-SubCell"/>
</dbReference>
<dbReference type="GO" id="GO:0032974">
    <property type="term" value="P:amino acid transmembrane export from vacuole"/>
    <property type="evidence" value="ECO:0007669"/>
    <property type="project" value="InterPro"/>
</dbReference>
<dbReference type="GO" id="GO:0006914">
    <property type="term" value="P:autophagy"/>
    <property type="evidence" value="ECO:0007669"/>
    <property type="project" value="UniProtKB-KW"/>
</dbReference>
<dbReference type="CDD" id="cd17483">
    <property type="entry name" value="MFS_Atg22_like"/>
    <property type="match status" value="1"/>
</dbReference>
<dbReference type="Gene3D" id="1.20.1250.20">
    <property type="entry name" value="MFS general substrate transporter like domains"/>
    <property type="match status" value="1"/>
</dbReference>
<dbReference type="InterPro" id="IPR044738">
    <property type="entry name" value="Atg22"/>
</dbReference>
<dbReference type="InterPro" id="IPR024671">
    <property type="entry name" value="Atg22-like"/>
</dbReference>
<dbReference type="InterPro" id="IPR050495">
    <property type="entry name" value="ATG22/LtaA_families"/>
</dbReference>
<dbReference type="InterPro" id="IPR036259">
    <property type="entry name" value="MFS_trans_sf"/>
</dbReference>
<dbReference type="PANTHER" id="PTHR23519">
    <property type="entry name" value="AUTOPHAGY-RELATED PROTEIN 22"/>
    <property type="match status" value="1"/>
</dbReference>
<dbReference type="PANTHER" id="PTHR23519:SF1">
    <property type="entry name" value="AUTOPHAGY-RELATED PROTEIN 22"/>
    <property type="match status" value="1"/>
</dbReference>
<dbReference type="Pfam" id="PF11700">
    <property type="entry name" value="ATG22"/>
    <property type="match status" value="1"/>
</dbReference>
<dbReference type="SUPFAM" id="SSF103473">
    <property type="entry name" value="MFS general substrate transporter"/>
    <property type="match status" value="1"/>
</dbReference>
<accession>A1DG37</accession>
<feature type="chain" id="PRO_0000318026" description="Autophagy-related protein 22-1">
    <location>
        <begin position="1"/>
        <end position="609"/>
    </location>
</feature>
<feature type="transmembrane region" description="Helical" evidence="2">
    <location>
        <begin position="95"/>
        <end position="115"/>
    </location>
</feature>
<feature type="transmembrane region" description="Helical" evidence="2">
    <location>
        <begin position="117"/>
        <end position="137"/>
    </location>
</feature>
<feature type="transmembrane region" description="Helical" evidence="2">
    <location>
        <begin position="151"/>
        <end position="171"/>
    </location>
</feature>
<feature type="transmembrane region" description="Helical" evidence="2">
    <location>
        <begin position="176"/>
        <end position="196"/>
    </location>
</feature>
<feature type="transmembrane region" description="Helical" evidence="2">
    <location>
        <begin position="287"/>
        <end position="307"/>
    </location>
</feature>
<feature type="transmembrane region" description="Helical" evidence="2">
    <location>
        <begin position="317"/>
        <end position="337"/>
    </location>
</feature>
<feature type="transmembrane region" description="Helical" evidence="2">
    <location>
        <begin position="381"/>
        <end position="401"/>
    </location>
</feature>
<feature type="transmembrane region" description="Helical" evidence="2">
    <location>
        <begin position="415"/>
        <end position="435"/>
    </location>
</feature>
<feature type="transmembrane region" description="Helical" evidence="2">
    <location>
        <begin position="450"/>
        <end position="470"/>
    </location>
</feature>
<feature type="transmembrane region" description="Helical" evidence="2">
    <location>
        <begin position="487"/>
        <end position="509"/>
    </location>
</feature>
<feature type="transmembrane region" description="Helical" evidence="2">
    <location>
        <begin position="522"/>
        <end position="542"/>
    </location>
</feature>
<feature type="transmembrane region" description="Helical" evidence="2">
    <location>
        <begin position="552"/>
        <end position="572"/>
    </location>
</feature>
<feature type="region of interest" description="Disordered" evidence="3">
    <location>
        <begin position="214"/>
        <end position="238"/>
    </location>
</feature>
<feature type="compositionally biased region" description="Basic and acidic residues" evidence="3">
    <location>
        <begin position="225"/>
        <end position="238"/>
    </location>
</feature>
<feature type="glycosylation site" description="N-linked (GlcNAc...) asparagine" evidence="2">
    <location>
        <position position="244"/>
    </location>
</feature>
<feature type="glycosylation site" description="N-linked (GlcNAc...) asparagine" evidence="2">
    <location>
        <position position="309"/>
    </location>
</feature>
<feature type="glycosylation site" description="N-linked (GlcNAc...) asparagine" evidence="2">
    <location>
        <position position="443"/>
    </location>
</feature>
<sequence length="609" mass="65794">MRAGDETETSIMRPQYPGDDIRPTSKKELAGWYSYGWAAEVFTVCAMGSFLPITLEQMARDRGVLLSDKVTPCSATLNGPSKTSTQAQWTLSSRYYAGGPTVVSQCVVYIFGVEINTASFAMYTFSVSVFIQAILIISMSGAADHGSHRKLLLVAFAVIGSVSTMLFLGVVPKIYMVGAVIAIIANTCFGASFVLLNSFLPLLVRHHPSVLRGAREPPPALDGSRAQEGHSDTTNDIDHGVESNATSPLLHAHQGNSENAEADMHPATPITVSQELKLSTRISSFGIGIGYIGAIILQIVCILVVIATNQTTFSLRLVLFLIGLWWFIFTIPAALWLRSRPGPPFTTTHQGKHTRSWIGYMAYAWKSLYRTAVRTRHLKDILLFLAAWLLLSDGIATVSGTAVLFAKTQLNMQPAALGLINVIAMVAGVLGAFSWGSVSRVFNLSASQTIIACILLFELVPLYGLLGFIPAVKSLGFLGLQQPWEMFPLGIVYGLVMGGLSSYCRSFFGELIPPGNEAAFYALYAITDKGSSIFGPAIVGIITDRYGEIRPAFVFLAILIFLPLPLMLLVDVERGKRDALALAAELQPSGAQTYGTLPANEDRAPPSEL</sequence>
<organism>
    <name type="scientific">Neosartorya fischeri (strain ATCC 1020 / DSM 3700 / CBS 544.65 / FGSC A1164 / JCM 1740 / NRRL 181 / WB 181)</name>
    <name type="common">Aspergillus fischerianus</name>
    <dbReference type="NCBI Taxonomy" id="331117"/>
    <lineage>
        <taxon>Eukaryota</taxon>
        <taxon>Fungi</taxon>
        <taxon>Dikarya</taxon>
        <taxon>Ascomycota</taxon>
        <taxon>Pezizomycotina</taxon>
        <taxon>Eurotiomycetes</taxon>
        <taxon>Eurotiomycetidae</taxon>
        <taxon>Eurotiales</taxon>
        <taxon>Aspergillaceae</taxon>
        <taxon>Aspergillus</taxon>
        <taxon>Aspergillus subgen. Fumigati</taxon>
    </lineage>
</organism>
<keyword id="KW-0029">Amino-acid transport</keyword>
<keyword id="KW-0072">Autophagy</keyword>
<keyword id="KW-0325">Glycoprotein</keyword>
<keyword id="KW-0472">Membrane</keyword>
<keyword id="KW-1185">Reference proteome</keyword>
<keyword id="KW-0812">Transmembrane</keyword>
<keyword id="KW-1133">Transmembrane helix</keyword>
<keyword id="KW-0813">Transport</keyword>
<keyword id="KW-0926">Vacuole</keyword>
<protein>
    <recommendedName>
        <fullName>Autophagy-related protein 22-1</fullName>
    </recommendedName>
</protein>
<gene>
    <name type="primary">atg22-1</name>
    <name type="ORF">NFIA_082950</name>
</gene>
<evidence type="ECO:0000250" key="1"/>
<evidence type="ECO:0000255" key="2"/>
<evidence type="ECO:0000256" key="3">
    <source>
        <dbReference type="SAM" id="MobiDB-lite"/>
    </source>
</evidence>
<evidence type="ECO:0000305" key="4"/>
<reference key="1">
    <citation type="journal article" date="2008" name="PLoS Genet.">
        <title>Genomic islands in the pathogenic filamentous fungus Aspergillus fumigatus.</title>
        <authorList>
            <person name="Fedorova N.D."/>
            <person name="Khaldi N."/>
            <person name="Joardar V.S."/>
            <person name="Maiti R."/>
            <person name="Amedeo P."/>
            <person name="Anderson M.J."/>
            <person name="Crabtree J."/>
            <person name="Silva J.C."/>
            <person name="Badger J.H."/>
            <person name="Albarraq A."/>
            <person name="Angiuoli S."/>
            <person name="Bussey H."/>
            <person name="Bowyer P."/>
            <person name="Cotty P.J."/>
            <person name="Dyer P.S."/>
            <person name="Egan A."/>
            <person name="Galens K."/>
            <person name="Fraser-Liggett C.M."/>
            <person name="Haas B.J."/>
            <person name="Inman J.M."/>
            <person name="Kent R."/>
            <person name="Lemieux S."/>
            <person name="Malavazi I."/>
            <person name="Orvis J."/>
            <person name="Roemer T."/>
            <person name="Ronning C.M."/>
            <person name="Sundaram J.P."/>
            <person name="Sutton G."/>
            <person name="Turner G."/>
            <person name="Venter J.C."/>
            <person name="White O.R."/>
            <person name="Whitty B.R."/>
            <person name="Youngman P."/>
            <person name="Wolfe K.H."/>
            <person name="Goldman G.H."/>
            <person name="Wortman J.R."/>
            <person name="Jiang B."/>
            <person name="Denning D.W."/>
            <person name="Nierman W.C."/>
        </authorList>
    </citation>
    <scope>NUCLEOTIDE SEQUENCE [LARGE SCALE GENOMIC DNA]</scope>
    <source>
        <strain>ATCC 1020 / DSM 3700 / CBS 544.65 / FGSC A1164 / JCM 1740 / NRRL 181 / WB 181</strain>
    </source>
</reference>
<proteinExistence type="inferred from homology"/>
<name>AT221_NEOFI</name>